<dbReference type="EC" id="1.11.1.7"/>
<dbReference type="EMBL" id="X99097">
    <property type="protein sequence ID" value="CAA67551.1"/>
    <property type="molecule type" value="mRNA"/>
</dbReference>
<dbReference type="EMBL" id="AB008266">
    <property type="protein sequence ID" value="BAB10280.1"/>
    <property type="molecule type" value="Genomic_DNA"/>
</dbReference>
<dbReference type="EMBL" id="CP002688">
    <property type="protein sequence ID" value="AED97842.1"/>
    <property type="molecule type" value="Genomic_DNA"/>
</dbReference>
<dbReference type="EMBL" id="AF428274">
    <property type="protein sequence ID" value="AAL16106.1"/>
    <property type="molecule type" value="mRNA"/>
</dbReference>
<dbReference type="EMBL" id="BT002622">
    <property type="protein sequence ID" value="AAO11538.1"/>
    <property type="molecule type" value="mRNA"/>
</dbReference>
<dbReference type="EMBL" id="AY086282">
    <property type="protein sequence ID" value="AAM64354.1"/>
    <property type="molecule type" value="mRNA"/>
</dbReference>
<dbReference type="EMBL" id="AJ006961">
    <property type="protein sequence ID" value="CAA07353.1"/>
    <property type="molecule type" value="Genomic_DNA"/>
</dbReference>
<dbReference type="RefSeq" id="NP_201217.1">
    <property type="nucleotide sequence ID" value="NM_125808.3"/>
</dbReference>
<dbReference type="SMR" id="Q43387"/>
<dbReference type="BioGRID" id="21775">
    <property type="interactions" value="1"/>
</dbReference>
<dbReference type="FunCoup" id="Q43387">
    <property type="interactions" value="128"/>
</dbReference>
<dbReference type="STRING" id="3702.Q43387"/>
<dbReference type="PeroxiBase" id="237">
    <property type="entry name" value="AtPrx71"/>
</dbReference>
<dbReference type="GlyCosmos" id="Q43387">
    <property type="glycosylation" value="2 sites, No reported glycans"/>
</dbReference>
<dbReference type="GlyGen" id="Q43387">
    <property type="glycosylation" value="2 sites"/>
</dbReference>
<dbReference type="PaxDb" id="3702-AT5G64120.1"/>
<dbReference type="ProteomicsDB" id="236690"/>
<dbReference type="EnsemblPlants" id="AT5G64120.1">
    <property type="protein sequence ID" value="AT5G64120.1"/>
    <property type="gene ID" value="AT5G64120"/>
</dbReference>
<dbReference type="GeneID" id="836533"/>
<dbReference type="Gramene" id="AT5G64120.1">
    <property type="protein sequence ID" value="AT5G64120.1"/>
    <property type="gene ID" value="AT5G64120"/>
</dbReference>
<dbReference type="KEGG" id="ath:AT5G64120"/>
<dbReference type="Araport" id="AT5G64120"/>
<dbReference type="TAIR" id="AT5G64120">
    <property type="gene designation" value="PRX71"/>
</dbReference>
<dbReference type="eggNOG" id="ENOG502SI6S">
    <property type="taxonomic scope" value="Eukaryota"/>
</dbReference>
<dbReference type="HOGENOM" id="CLU_010543_0_3_1"/>
<dbReference type="InParanoid" id="Q43387"/>
<dbReference type="OMA" id="RYSGAIR"/>
<dbReference type="PhylomeDB" id="Q43387"/>
<dbReference type="BioCyc" id="ARA:AT5G64120-MONOMER"/>
<dbReference type="PRO" id="PR:Q43387"/>
<dbReference type="Proteomes" id="UP000006548">
    <property type="component" value="Chromosome 5"/>
</dbReference>
<dbReference type="ExpressionAtlas" id="Q43387">
    <property type="expression patterns" value="baseline and differential"/>
</dbReference>
<dbReference type="GO" id="GO:0048046">
    <property type="term" value="C:apoplast"/>
    <property type="evidence" value="ECO:0007005"/>
    <property type="project" value="TAIR"/>
</dbReference>
<dbReference type="GO" id="GO:0009505">
    <property type="term" value="C:plant-type cell wall"/>
    <property type="evidence" value="ECO:0000314"/>
    <property type="project" value="TAIR"/>
</dbReference>
<dbReference type="GO" id="GO:0099503">
    <property type="term" value="C:secretory vesicle"/>
    <property type="evidence" value="ECO:0007005"/>
    <property type="project" value="TAIR"/>
</dbReference>
<dbReference type="GO" id="GO:0020037">
    <property type="term" value="F:heme binding"/>
    <property type="evidence" value="ECO:0007669"/>
    <property type="project" value="InterPro"/>
</dbReference>
<dbReference type="GO" id="GO:0140825">
    <property type="term" value="F:lactoperoxidase activity"/>
    <property type="evidence" value="ECO:0007669"/>
    <property type="project" value="UniProtKB-EC"/>
</dbReference>
<dbReference type="GO" id="GO:0046872">
    <property type="term" value="F:metal ion binding"/>
    <property type="evidence" value="ECO:0007669"/>
    <property type="project" value="UniProtKB-KW"/>
</dbReference>
<dbReference type="GO" id="GO:0004601">
    <property type="term" value="F:peroxidase activity"/>
    <property type="evidence" value="ECO:0000314"/>
    <property type="project" value="TAIR"/>
</dbReference>
<dbReference type="GO" id="GO:0050832">
    <property type="term" value="P:defense response to fungus"/>
    <property type="evidence" value="ECO:0000315"/>
    <property type="project" value="TAIR"/>
</dbReference>
<dbReference type="GO" id="GO:0042744">
    <property type="term" value="P:hydrogen peroxide catabolic process"/>
    <property type="evidence" value="ECO:0007669"/>
    <property type="project" value="UniProtKB-KW"/>
</dbReference>
<dbReference type="GO" id="GO:0009808">
    <property type="term" value="P:lignin metabolic process"/>
    <property type="evidence" value="ECO:0000315"/>
    <property type="project" value="TAIR"/>
</dbReference>
<dbReference type="GO" id="GO:0045730">
    <property type="term" value="P:respiratory burst"/>
    <property type="evidence" value="ECO:0000314"/>
    <property type="project" value="TAIR"/>
</dbReference>
<dbReference type="GO" id="GO:0006979">
    <property type="term" value="P:response to oxidative stress"/>
    <property type="evidence" value="ECO:0007669"/>
    <property type="project" value="InterPro"/>
</dbReference>
<dbReference type="GO" id="GO:0048511">
    <property type="term" value="P:rhythmic process"/>
    <property type="evidence" value="ECO:0007669"/>
    <property type="project" value="UniProtKB-KW"/>
</dbReference>
<dbReference type="CDD" id="cd00693">
    <property type="entry name" value="secretory_peroxidase"/>
    <property type="match status" value="1"/>
</dbReference>
<dbReference type="FunFam" id="1.10.420.10:FF:000010">
    <property type="entry name" value="Peroxidase"/>
    <property type="match status" value="1"/>
</dbReference>
<dbReference type="FunFam" id="1.10.520.10:FF:000001">
    <property type="entry name" value="Peroxidase"/>
    <property type="match status" value="1"/>
</dbReference>
<dbReference type="Gene3D" id="1.10.520.10">
    <property type="match status" value="1"/>
</dbReference>
<dbReference type="Gene3D" id="1.10.420.10">
    <property type="entry name" value="Peroxidase, domain 2"/>
    <property type="match status" value="1"/>
</dbReference>
<dbReference type="InterPro" id="IPR002016">
    <property type="entry name" value="Haem_peroxidase"/>
</dbReference>
<dbReference type="InterPro" id="IPR010255">
    <property type="entry name" value="Haem_peroxidase_sf"/>
</dbReference>
<dbReference type="InterPro" id="IPR000823">
    <property type="entry name" value="Peroxidase_pln"/>
</dbReference>
<dbReference type="InterPro" id="IPR019794">
    <property type="entry name" value="Peroxidases_AS"/>
</dbReference>
<dbReference type="InterPro" id="IPR019793">
    <property type="entry name" value="Peroxidases_heam-ligand_BS"/>
</dbReference>
<dbReference type="InterPro" id="IPR033905">
    <property type="entry name" value="Secretory_peroxidase"/>
</dbReference>
<dbReference type="PANTHER" id="PTHR31235">
    <property type="entry name" value="PEROXIDASE 25-RELATED"/>
    <property type="match status" value="1"/>
</dbReference>
<dbReference type="Pfam" id="PF00141">
    <property type="entry name" value="peroxidase"/>
    <property type="match status" value="1"/>
</dbReference>
<dbReference type="PRINTS" id="PR00458">
    <property type="entry name" value="PEROXIDASE"/>
</dbReference>
<dbReference type="PRINTS" id="PR00461">
    <property type="entry name" value="PLPEROXIDASE"/>
</dbReference>
<dbReference type="SUPFAM" id="SSF48113">
    <property type="entry name" value="Heme-dependent peroxidases"/>
    <property type="match status" value="1"/>
</dbReference>
<dbReference type="PROSITE" id="PS00435">
    <property type="entry name" value="PEROXIDASE_1"/>
    <property type="match status" value="1"/>
</dbReference>
<dbReference type="PROSITE" id="PS00436">
    <property type="entry name" value="PEROXIDASE_2"/>
    <property type="match status" value="1"/>
</dbReference>
<dbReference type="PROSITE" id="PS50873">
    <property type="entry name" value="PEROXIDASE_4"/>
    <property type="match status" value="1"/>
</dbReference>
<feature type="signal peptide" evidence="1">
    <location>
        <begin position="1"/>
        <end position="23"/>
    </location>
</feature>
<feature type="chain" id="PRO_0000023736" description="Peroxidase 71">
    <location>
        <begin position="24"/>
        <end position="328"/>
    </location>
</feature>
<feature type="active site" description="Proton acceptor" evidence="2 3">
    <location>
        <position position="75"/>
    </location>
</feature>
<feature type="binding site" evidence="2">
    <location>
        <position position="76"/>
    </location>
    <ligand>
        <name>Ca(2+)</name>
        <dbReference type="ChEBI" id="CHEBI:29108"/>
        <label>1</label>
    </ligand>
</feature>
<feature type="binding site" evidence="2">
    <location>
        <position position="79"/>
    </location>
    <ligand>
        <name>Ca(2+)</name>
        <dbReference type="ChEBI" id="CHEBI:29108"/>
        <label>1</label>
    </ligand>
</feature>
<feature type="binding site" evidence="2">
    <location>
        <position position="81"/>
    </location>
    <ligand>
        <name>Ca(2+)</name>
        <dbReference type="ChEBI" id="CHEBI:29108"/>
        <label>1</label>
    </ligand>
</feature>
<feature type="binding site" evidence="2">
    <location>
        <position position="83"/>
    </location>
    <ligand>
        <name>Ca(2+)</name>
        <dbReference type="ChEBI" id="CHEBI:29108"/>
        <label>1</label>
    </ligand>
</feature>
<feature type="binding site" evidence="2">
    <location>
        <position position="85"/>
    </location>
    <ligand>
        <name>Ca(2+)</name>
        <dbReference type="ChEBI" id="CHEBI:29108"/>
        <label>1</label>
    </ligand>
</feature>
<feature type="binding site" evidence="2">
    <location>
        <position position="167"/>
    </location>
    <ligand>
        <name>substrate</name>
    </ligand>
</feature>
<feature type="binding site" description="axial binding residue" evidence="2">
    <location>
        <position position="197"/>
    </location>
    <ligand>
        <name>heme b</name>
        <dbReference type="ChEBI" id="CHEBI:60344"/>
    </ligand>
    <ligandPart>
        <name>Fe</name>
        <dbReference type="ChEBI" id="CHEBI:18248"/>
    </ligandPart>
</feature>
<feature type="binding site" evidence="2">
    <location>
        <position position="198"/>
    </location>
    <ligand>
        <name>Ca(2+)</name>
        <dbReference type="ChEBI" id="CHEBI:29108"/>
        <label>2</label>
    </ligand>
</feature>
<feature type="binding site" evidence="2">
    <location>
        <position position="248"/>
    </location>
    <ligand>
        <name>Ca(2+)</name>
        <dbReference type="ChEBI" id="CHEBI:29108"/>
        <label>2</label>
    </ligand>
</feature>
<feature type="binding site" evidence="2">
    <location>
        <position position="251"/>
    </location>
    <ligand>
        <name>Ca(2+)</name>
        <dbReference type="ChEBI" id="CHEBI:29108"/>
        <label>2</label>
    </ligand>
</feature>
<feature type="binding site" evidence="2">
    <location>
        <position position="256"/>
    </location>
    <ligand>
        <name>Ca(2+)</name>
        <dbReference type="ChEBI" id="CHEBI:29108"/>
        <label>2</label>
    </ligand>
</feature>
<feature type="site" description="Transition state stabilizer" evidence="2">
    <location>
        <position position="71"/>
    </location>
</feature>
<feature type="glycosylation site" description="N-linked (GlcNAc...) asparagine" evidence="1">
    <location>
        <position position="213"/>
    </location>
</feature>
<feature type="glycosylation site" description="N-linked (GlcNAc...) asparagine" evidence="1">
    <location>
        <position position="262"/>
    </location>
</feature>
<feature type="disulfide bond" evidence="2">
    <location>
        <begin position="44"/>
        <end position="120"/>
    </location>
</feature>
<feature type="disulfide bond" evidence="2">
    <location>
        <begin position="77"/>
        <end position="82"/>
    </location>
</feature>
<feature type="disulfide bond" evidence="2">
    <location>
        <begin position="126"/>
        <end position="324"/>
    </location>
</feature>
<feature type="disulfide bond" evidence="2">
    <location>
        <begin position="204"/>
        <end position="235"/>
    </location>
</feature>
<feature type="sequence conflict" description="In Ref. 5; AAM64354." evidence="7" ref="5">
    <original>I</original>
    <variation>V</variation>
    <location>
        <position position="18"/>
    </location>
</feature>
<feature type="sequence conflict" description="In Ref. 5; AAM64354." evidence="7" ref="5">
    <original>G</original>
    <variation>S</variation>
    <location>
        <position position="98"/>
    </location>
</feature>
<evidence type="ECO:0000255" key="1"/>
<evidence type="ECO:0000255" key="2">
    <source>
        <dbReference type="PROSITE-ProRule" id="PRU00297"/>
    </source>
</evidence>
<evidence type="ECO:0000255" key="3">
    <source>
        <dbReference type="PROSITE-ProRule" id="PRU10012"/>
    </source>
</evidence>
<evidence type="ECO:0000269" key="4">
    <source>
    </source>
</evidence>
<evidence type="ECO:0000269" key="5">
    <source>
    </source>
</evidence>
<evidence type="ECO:0000269" key="6">
    <source>
    </source>
</evidence>
<evidence type="ECO:0000305" key="7"/>
<gene>
    <name type="primary">PER71</name>
    <name type="synonym">P71</name>
    <name type="ordered locus">At5g64120</name>
    <name type="ORF">MHJ24.10</name>
</gene>
<comment type="function">
    <text>Removal of H(2)O(2), oxidation of toxic reductants, biosynthesis and degradation of lignin, suberization, auxin catabolism, response to environmental stresses such as wounding, pathogen attack and oxidative stress. These functions might be dependent on each isozyme/isoform in each plant tissue.</text>
</comment>
<comment type="catalytic activity">
    <reaction>
        <text>2 a phenolic donor + H2O2 = 2 a phenolic radical donor + 2 H2O</text>
        <dbReference type="Rhea" id="RHEA:56136"/>
        <dbReference type="ChEBI" id="CHEBI:15377"/>
        <dbReference type="ChEBI" id="CHEBI:16240"/>
        <dbReference type="ChEBI" id="CHEBI:139520"/>
        <dbReference type="ChEBI" id="CHEBI:139521"/>
        <dbReference type="EC" id="1.11.1.7"/>
    </reaction>
</comment>
<comment type="cofactor">
    <cofactor evidence="2">
        <name>heme b</name>
        <dbReference type="ChEBI" id="CHEBI:60344"/>
    </cofactor>
    <text evidence="2">Binds 1 heme b (iron(II)-protoporphyrin IX) group per subunit.</text>
</comment>
<comment type="cofactor">
    <cofactor evidence="2">
        <name>Ca(2+)</name>
        <dbReference type="ChEBI" id="CHEBI:29108"/>
    </cofactor>
    <text evidence="2">Binds 2 calcium ions per subunit.</text>
</comment>
<comment type="subcellular location">
    <subcellularLocation>
        <location evidence="2">Secreted</location>
    </subcellularLocation>
</comment>
<comment type="tissue specificity">
    <text>Slightly expressed in roots.</text>
</comment>
<comment type="induction">
    <text evidence="4 5 6">Induced in response of mechanical wounding. Induced by methyl jasmonate, a plant defense-related signaling molecule. Expressed under a diurnal rhythm (circadian clock control).</text>
</comment>
<comment type="miscellaneous">
    <text>There are 73 peroxidase genes in A.thaliana.</text>
</comment>
<comment type="similarity">
    <text evidence="2">Belongs to the peroxidase family. Classical plant (class III) peroxidase subfamily.</text>
</comment>
<proteinExistence type="evidence at protein level"/>
<accession>Q43387</accession>
<accession>Q9SBA0</accession>
<protein>
    <recommendedName>
        <fullName>Peroxidase 71</fullName>
        <shortName>Atperox P71</shortName>
        <ecNumber>1.11.1.7</ecNumber>
    </recommendedName>
    <alternativeName>
        <fullName>ATP15a</fullName>
    </alternativeName>
    <alternativeName>
        <fullName>ATPO2</fullName>
    </alternativeName>
</protein>
<sequence>MGLVRSLCLLITFLNCLIISVHGQATARPGPVSGTRIGFYLTTCPRAETIVRNAVNAGFSSDPRIAPGILRMHFHDCFVQGCDGSILISGANTERTAGPNLNLQGFEVIDNAKTQLEAACPGVVSCADILALAARDTVILTQGTGWQVPTGRRDGRVSLASNANNLPGPRDSVAVQQQKFSALGLNTRDLVVLVGGHTIGTAGCGVFRNRLFNTTGQTADPTIDPTFLAQLQTQCPQNGDGSVRVDLDTGSGSTWDTSYYNNLSRGRGVLQSDQVLWTDPATRPIVQQLMAPRSTFNVEFARSMVRMSNIGVVTGANGEIRRVCSAVN</sequence>
<keyword id="KW-0090">Biological rhythms</keyword>
<keyword id="KW-0106">Calcium</keyword>
<keyword id="KW-1015">Disulfide bond</keyword>
<keyword id="KW-0325">Glycoprotein</keyword>
<keyword id="KW-0349">Heme</keyword>
<keyword id="KW-0376">Hydrogen peroxide</keyword>
<keyword id="KW-0408">Iron</keyword>
<keyword id="KW-0479">Metal-binding</keyword>
<keyword id="KW-0560">Oxidoreductase</keyword>
<keyword id="KW-0575">Peroxidase</keyword>
<keyword id="KW-1185">Reference proteome</keyword>
<keyword id="KW-0964">Secreted</keyword>
<keyword id="KW-0732">Signal</keyword>
<reference key="1">
    <citation type="submission" date="1996-07" db="EMBL/GenBank/DDBJ databases">
        <title>From expressed sequence tags to structure, function, evolution and expression of 28 ER-targeted Arabidopsis peroxidases.</title>
        <authorList>
            <person name="Welinder K.G."/>
            <person name="Jespersen H.M."/>
            <person name="Kjaersgaard I.V.H."/>
            <person name="Justesen A.F."/>
            <person name="Oestergaard L."/>
            <person name="Abelskov A.K."/>
            <person name="Jensen R.B."/>
            <person name="Hansen L.N."/>
            <person name="Rasmussen S.K."/>
        </authorList>
    </citation>
    <scope>NUCLEOTIDE SEQUENCE [MRNA]</scope>
    <source>
        <strain>cv. Columbia</strain>
    </source>
</reference>
<reference key="2">
    <citation type="journal article" date="1997" name="DNA Res.">
        <title>Structural analysis of Arabidopsis thaliana chromosome 5. III. Sequence features of the regions of 1,191,918 bp covered by seventeen physically assigned P1 clones.</title>
        <authorList>
            <person name="Nakamura Y."/>
            <person name="Sato S."/>
            <person name="Kaneko T."/>
            <person name="Kotani H."/>
            <person name="Asamizu E."/>
            <person name="Miyajima N."/>
            <person name="Tabata S."/>
        </authorList>
    </citation>
    <scope>NUCLEOTIDE SEQUENCE [LARGE SCALE GENOMIC DNA]</scope>
    <source>
        <strain>cv. Columbia</strain>
    </source>
</reference>
<reference key="3">
    <citation type="journal article" date="2017" name="Plant J.">
        <title>Araport11: a complete reannotation of the Arabidopsis thaliana reference genome.</title>
        <authorList>
            <person name="Cheng C.Y."/>
            <person name="Krishnakumar V."/>
            <person name="Chan A.P."/>
            <person name="Thibaud-Nissen F."/>
            <person name="Schobel S."/>
            <person name="Town C.D."/>
        </authorList>
    </citation>
    <scope>GENOME REANNOTATION</scope>
    <source>
        <strain>cv. Columbia</strain>
    </source>
</reference>
<reference key="4">
    <citation type="journal article" date="2003" name="Science">
        <title>Empirical analysis of transcriptional activity in the Arabidopsis genome.</title>
        <authorList>
            <person name="Yamada K."/>
            <person name="Lim J."/>
            <person name="Dale J.M."/>
            <person name="Chen H."/>
            <person name="Shinn P."/>
            <person name="Palm C.J."/>
            <person name="Southwick A.M."/>
            <person name="Wu H.C."/>
            <person name="Kim C.J."/>
            <person name="Nguyen M."/>
            <person name="Pham P.K."/>
            <person name="Cheuk R.F."/>
            <person name="Karlin-Newmann G."/>
            <person name="Liu S.X."/>
            <person name="Lam B."/>
            <person name="Sakano H."/>
            <person name="Wu T."/>
            <person name="Yu G."/>
            <person name="Miranda M."/>
            <person name="Quach H.L."/>
            <person name="Tripp M."/>
            <person name="Chang C.H."/>
            <person name="Lee J.M."/>
            <person name="Toriumi M.J."/>
            <person name="Chan M.M."/>
            <person name="Tang C.C."/>
            <person name="Onodera C.S."/>
            <person name="Deng J.M."/>
            <person name="Akiyama K."/>
            <person name="Ansari Y."/>
            <person name="Arakawa T."/>
            <person name="Banh J."/>
            <person name="Banno F."/>
            <person name="Bowser L."/>
            <person name="Brooks S.Y."/>
            <person name="Carninci P."/>
            <person name="Chao Q."/>
            <person name="Choy N."/>
            <person name="Enju A."/>
            <person name="Goldsmith A.D."/>
            <person name="Gurjal M."/>
            <person name="Hansen N.F."/>
            <person name="Hayashizaki Y."/>
            <person name="Johnson-Hopson C."/>
            <person name="Hsuan V.W."/>
            <person name="Iida K."/>
            <person name="Karnes M."/>
            <person name="Khan S."/>
            <person name="Koesema E."/>
            <person name="Ishida J."/>
            <person name="Jiang P.X."/>
            <person name="Jones T."/>
            <person name="Kawai J."/>
            <person name="Kamiya A."/>
            <person name="Meyers C."/>
            <person name="Nakajima M."/>
            <person name="Narusaka M."/>
            <person name="Seki M."/>
            <person name="Sakurai T."/>
            <person name="Satou M."/>
            <person name="Tamse R."/>
            <person name="Vaysberg M."/>
            <person name="Wallender E.K."/>
            <person name="Wong C."/>
            <person name="Yamamura Y."/>
            <person name="Yuan S."/>
            <person name="Shinozaki K."/>
            <person name="Davis R.W."/>
            <person name="Theologis A."/>
            <person name="Ecker J.R."/>
        </authorList>
    </citation>
    <scope>NUCLEOTIDE SEQUENCE [LARGE SCALE MRNA]</scope>
    <source>
        <strain>cv. Columbia</strain>
    </source>
</reference>
<reference key="5">
    <citation type="submission" date="2002-03" db="EMBL/GenBank/DDBJ databases">
        <title>Full-length cDNA from Arabidopsis thaliana.</title>
        <authorList>
            <person name="Brover V.V."/>
            <person name="Troukhan M.E."/>
            <person name="Alexandrov N.A."/>
            <person name="Lu Y.-P."/>
            <person name="Flavell R.B."/>
            <person name="Feldmann K.A."/>
        </authorList>
    </citation>
    <scope>NUCLEOTIDE SEQUENCE [LARGE SCALE MRNA]</scope>
</reference>
<reference key="6">
    <citation type="journal article" date="1998" name="Biochim. Biophys. Acta">
        <title>Analysis of two incompletely spliced Arabidopsis cDNAs encoding novel types of peroxidase.</title>
        <authorList>
            <person name="Justesen A.F."/>
            <person name="Jespersen H.M."/>
            <person name="Welinder K.G."/>
        </authorList>
    </citation>
    <scope>NUCLEOTIDE SEQUENCE [GENOMIC DNA / MRNA] OF 49-201</scope>
    <source>
        <strain>cv. Columbia</strain>
    </source>
</reference>
<reference key="7">
    <citation type="journal article" date="1998" name="FEBS Lett.">
        <title>Computational analyses and annotations of the Arabidopsis peroxidase gene family.</title>
        <authorList>
            <person name="Oestergaard L."/>
            <person name="Pedersen A.G."/>
            <person name="Jespersen H.M."/>
            <person name="Brunak S."/>
            <person name="Welinder K.G."/>
        </authorList>
    </citation>
    <scope>CHARACTERIZATION</scope>
    <source>
        <strain>cv. Columbia</strain>
    </source>
</reference>
<reference key="8">
    <citation type="journal article" date="2000" name="Science">
        <title>Orchestrated transcription of key pathways in Arabidopsis by the circadian clock.</title>
        <authorList>
            <person name="Harmer S.L."/>
            <person name="Hogenesch J.B."/>
            <person name="Straume M."/>
            <person name="Chang H.-S."/>
            <person name="Han B."/>
            <person name="Zhu T."/>
            <person name="Wang X."/>
            <person name="Kreps J.A."/>
            <person name="Kay S.A."/>
        </authorList>
    </citation>
    <scope>INDUCTION</scope>
    <source>
        <strain>cv. Columbia</strain>
    </source>
</reference>
<reference key="9">
    <citation type="journal article" date="2000" name="Proc. Natl. Acad. Sci. U.S.A.">
        <title>Coordinated plant defense responses in Arabidopsis revealed by microarray analysis.</title>
        <authorList>
            <person name="Schenk P.M."/>
            <person name="Kazan K."/>
            <person name="Wilson I."/>
            <person name="Anderson J.P."/>
            <person name="Richmond T."/>
            <person name="Somerville S.C."/>
            <person name="Manners J.M."/>
        </authorList>
    </citation>
    <scope>INDUCTION</scope>
    <source>
        <strain>cv. Columbia</strain>
    </source>
</reference>
<reference key="10">
    <citation type="journal article" date="2002" name="Plant Physiol.">
        <title>Transcriptional profiling reveals novel interactions between wounding, pathogen, abiotic stress, and hormonal responses in Arabidopsis.</title>
        <authorList>
            <person name="Cheong Y.H."/>
            <person name="Chang H.-S."/>
            <person name="Gupta R."/>
            <person name="Wang X."/>
            <person name="Zhu T."/>
            <person name="Luan S."/>
        </authorList>
    </citation>
    <scope>INDUCTION</scope>
    <source>
        <strain>cv. Columbia</strain>
    </source>
</reference>
<reference key="11">
    <citation type="journal article" date="2002" name="Gene">
        <title>Analysis and expression of the class III peroxidase large gene family in Arabidopsis thaliana.</title>
        <authorList>
            <person name="Tognolli M."/>
            <person name="Penel C."/>
            <person name="Greppin H."/>
            <person name="Simon P."/>
        </authorList>
    </citation>
    <scope>GENE FAMILY ORGANIZATION</scope>
    <scope>NOMENCLATURE</scope>
    <source>
        <strain>cv. Columbia</strain>
    </source>
</reference>
<organism>
    <name type="scientific">Arabidopsis thaliana</name>
    <name type="common">Mouse-ear cress</name>
    <dbReference type="NCBI Taxonomy" id="3702"/>
    <lineage>
        <taxon>Eukaryota</taxon>
        <taxon>Viridiplantae</taxon>
        <taxon>Streptophyta</taxon>
        <taxon>Embryophyta</taxon>
        <taxon>Tracheophyta</taxon>
        <taxon>Spermatophyta</taxon>
        <taxon>Magnoliopsida</taxon>
        <taxon>eudicotyledons</taxon>
        <taxon>Gunneridae</taxon>
        <taxon>Pentapetalae</taxon>
        <taxon>rosids</taxon>
        <taxon>malvids</taxon>
        <taxon>Brassicales</taxon>
        <taxon>Brassicaceae</taxon>
        <taxon>Camelineae</taxon>
        <taxon>Arabidopsis</taxon>
    </lineage>
</organism>
<name>PER71_ARATH</name>